<gene>
    <name evidence="1" type="primary">tusC</name>
    <name type="ordered locus">EcSMS35_3625</name>
</gene>
<evidence type="ECO:0000255" key="1">
    <source>
        <dbReference type="HAMAP-Rule" id="MF_00389"/>
    </source>
</evidence>
<comment type="function">
    <text evidence="1">Part of a sulfur-relay system required for 2-thiolation of 5-methylaminomethyl-2-thiouridine (mnm(5)s(2)U) at tRNA wobble positions.</text>
</comment>
<comment type="subunit">
    <text evidence="1">Heterohexamer, formed by a dimer of trimers. The hexameric TusBCD complex contains 2 copies each of TusB, TusC and TusD. The TusBCD complex interacts with TusE.</text>
</comment>
<comment type="subcellular location">
    <subcellularLocation>
        <location evidence="1">Cytoplasm</location>
    </subcellularLocation>
</comment>
<comment type="similarity">
    <text evidence="1">Belongs to the DsrF/TusC family.</text>
</comment>
<proteinExistence type="inferred from homology"/>
<organism>
    <name type="scientific">Escherichia coli (strain SMS-3-5 / SECEC)</name>
    <dbReference type="NCBI Taxonomy" id="439855"/>
    <lineage>
        <taxon>Bacteria</taxon>
        <taxon>Pseudomonadati</taxon>
        <taxon>Pseudomonadota</taxon>
        <taxon>Gammaproteobacteria</taxon>
        <taxon>Enterobacterales</taxon>
        <taxon>Enterobacteriaceae</taxon>
        <taxon>Escherichia</taxon>
    </lineage>
</organism>
<protein>
    <recommendedName>
        <fullName evidence="1">Protein TusC</fullName>
    </recommendedName>
    <alternativeName>
        <fullName evidence="1">tRNA 2-thiouridine synthesizing protein C</fullName>
    </alternativeName>
</protein>
<accession>B1LHE4</accession>
<dbReference type="EMBL" id="CP000970">
    <property type="protein sequence ID" value="ACB18104.1"/>
    <property type="molecule type" value="Genomic_DNA"/>
</dbReference>
<dbReference type="RefSeq" id="WP_000820714.1">
    <property type="nucleotide sequence ID" value="NC_010498.1"/>
</dbReference>
<dbReference type="SMR" id="B1LHE4"/>
<dbReference type="GeneID" id="93778654"/>
<dbReference type="KEGG" id="ecm:EcSMS35_3625"/>
<dbReference type="HOGENOM" id="CLU_155943_1_0_6"/>
<dbReference type="Proteomes" id="UP000007011">
    <property type="component" value="Chromosome"/>
</dbReference>
<dbReference type="GO" id="GO:0005737">
    <property type="term" value="C:cytoplasm"/>
    <property type="evidence" value="ECO:0007669"/>
    <property type="project" value="UniProtKB-SubCell"/>
</dbReference>
<dbReference type="GO" id="GO:0008033">
    <property type="term" value="P:tRNA processing"/>
    <property type="evidence" value="ECO:0007669"/>
    <property type="project" value="UniProtKB-UniRule"/>
</dbReference>
<dbReference type="FunFam" id="3.40.1260.10:FF:000004">
    <property type="entry name" value="Sulfurtransferase TusC"/>
    <property type="match status" value="1"/>
</dbReference>
<dbReference type="Gene3D" id="3.40.1260.10">
    <property type="entry name" value="DsrEFH-like"/>
    <property type="match status" value="1"/>
</dbReference>
<dbReference type="HAMAP" id="MF_00389">
    <property type="entry name" value="Thiourid_synth_C"/>
    <property type="match status" value="1"/>
</dbReference>
<dbReference type="InterPro" id="IPR027396">
    <property type="entry name" value="DsrEFH-like"/>
</dbReference>
<dbReference type="InterPro" id="IPR003787">
    <property type="entry name" value="Sulphur_relay_DsrE/F-like"/>
</dbReference>
<dbReference type="InterPro" id="IPR037450">
    <property type="entry name" value="Sulphur_relay_TusC"/>
</dbReference>
<dbReference type="InterPro" id="IPR017462">
    <property type="entry name" value="Sulphur_relay_TusC/DsrF"/>
</dbReference>
<dbReference type="NCBIfam" id="NF001238">
    <property type="entry name" value="PRK00211.1"/>
    <property type="match status" value="1"/>
</dbReference>
<dbReference type="NCBIfam" id="TIGR03010">
    <property type="entry name" value="sulf_tusC_dsrF"/>
    <property type="match status" value="1"/>
</dbReference>
<dbReference type="PANTHER" id="PTHR38780">
    <property type="entry name" value="PROTEIN TUSC"/>
    <property type="match status" value="1"/>
</dbReference>
<dbReference type="PANTHER" id="PTHR38780:SF1">
    <property type="entry name" value="PROTEIN TUSC"/>
    <property type="match status" value="1"/>
</dbReference>
<dbReference type="Pfam" id="PF02635">
    <property type="entry name" value="DsrE"/>
    <property type="match status" value="1"/>
</dbReference>
<dbReference type="SUPFAM" id="SSF75169">
    <property type="entry name" value="DsrEFH-like"/>
    <property type="match status" value="1"/>
</dbReference>
<reference key="1">
    <citation type="journal article" date="2008" name="J. Bacteriol.">
        <title>Insights into the environmental resistance gene pool from the genome sequence of the multidrug-resistant environmental isolate Escherichia coli SMS-3-5.</title>
        <authorList>
            <person name="Fricke W.F."/>
            <person name="Wright M.S."/>
            <person name="Lindell A.H."/>
            <person name="Harkins D.M."/>
            <person name="Baker-Austin C."/>
            <person name="Ravel J."/>
            <person name="Stepanauskas R."/>
        </authorList>
    </citation>
    <scope>NUCLEOTIDE SEQUENCE [LARGE SCALE GENOMIC DNA]</scope>
    <source>
        <strain>SMS-3-5 / SECEC</strain>
    </source>
</reference>
<keyword id="KW-0963">Cytoplasm</keyword>
<keyword id="KW-0819">tRNA processing</keyword>
<sequence>MKRIAFVFSTAPHGTAAGREGLDALLATSALTDDLAVFFIADGVFQLLPGQKPDAVLARDYIATFKLLGLYDIEQCWVCAASLRERGLDPQTPFVVEATPLEADALRRELANYDVILRF</sequence>
<feature type="chain" id="PRO_1000122841" description="Protein TusC">
    <location>
        <begin position="1"/>
        <end position="119"/>
    </location>
</feature>
<name>TUSC_ECOSM</name>